<reference key="1">
    <citation type="submission" date="2007-10" db="EMBL/GenBank/DDBJ databases">
        <title>Complete genome of Alkaliphilus oremlandii OhILAs.</title>
        <authorList>
            <person name="Copeland A."/>
            <person name="Lucas S."/>
            <person name="Lapidus A."/>
            <person name="Barry K."/>
            <person name="Detter J.C."/>
            <person name="Glavina del Rio T."/>
            <person name="Hammon N."/>
            <person name="Israni S."/>
            <person name="Dalin E."/>
            <person name="Tice H."/>
            <person name="Pitluck S."/>
            <person name="Chain P."/>
            <person name="Malfatti S."/>
            <person name="Shin M."/>
            <person name="Vergez L."/>
            <person name="Schmutz J."/>
            <person name="Larimer F."/>
            <person name="Land M."/>
            <person name="Hauser L."/>
            <person name="Kyrpides N."/>
            <person name="Mikhailova N."/>
            <person name="Stolz J.F."/>
            <person name="Dawson A."/>
            <person name="Fisher E."/>
            <person name="Crable B."/>
            <person name="Perera E."/>
            <person name="Lisak J."/>
            <person name="Ranganathan M."/>
            <person name="Basu P."/>
            <person name="Richardson P."/>
        </authorList>
    </citation>
    <scope>NUCLEOTIDE SEQUENCE [LARGE SCALE GENOMIC DNA]</scope>
    <source>
        <strain>OhILAs</strain>
    </source>
</reference>
<feature type="chain" id="PRO_1000057469" description="Elongation factor 4">
    <location>
        <begin position="1"/>
        <end position="602"/>
    </location>
</feature>
<feature type="domain" description="tr-type G">
    <location>
        <begin position="7"/>
        <end position="189"/>
    </location>
</feature>
<feature type="binding site" evidence="1">
    <location>
        <begin position="19"/>
        <end position="24"/>
    </location>
    <ligand>
        <name>GTP</name>
        <dbReference type="ChEBI" id="CHEBI:37565"/>
    </ligand>
</feature>
<feature type="binding site" evidence="1">
    <location>
        <begin position="136"/>
        <end position="139"/>
    </location>
    <ligand>
        <name>GTP</name>
        <dbReference type="ChEBI" id="CHEBI:37565"/>
    </ligand>
</feature>
<organism>
    <name type="scientific">Alkaliphilus oremlandii (strain OhILAs)</name>
    <name type="common">Clostridium oremlandii (strain OhILAs)</name>
    <dbReference type="NCBI Taxonomy" id="350688"/>
    <lineage>
        <taxon>Bacteria</taxon>
        <taxon>Bacillati</taxon>
        <taxon>Bacillota</taxon>
        <taxon>Clostridia</taxon>
        <taxon>Peptostreptococcales</taxon>
        <taxon>Natronincolaceae</taxon>
        <taxon>Alkaliphilus</taxon>
    </lineage>
</organism>
<protein>
    <recommendedName>
        <fullName evidence="1">Elongation factor 4</fullName>
        <shortName evidence="1">EF-4</shortName>
        <ecNumber evidence="1">3.6.5.n1</ecNumber>
    </recommendedName>
    <alternativeName>
        <fullName evidence="1">Ribosomal back-translocase LepA</fullName>
    </alternativeName>
</protein>
<accession>A8MFA6</accession>
<keyword id="KW-1003">Cell membrane</keyword>
<keyword id="KW-0342">GTP-binding</keyword>
<keyword id="KW-0378">Hydrolase</keyword>
<keyword id="KW-0472">Membrane</keyword>
<keyword id="KW-0547">Nucleotide-binding</keyword>
<keyword id="KW-0648">Protein biosynthesis</keyword>
<keyword id="KW-1185">Reference proteome</keyword>
<proteinExistence type="inferred from homology"/>
<evidence type="ECO:0000255" key="1">
    <source>
        <dbReference type="HAMAP-Rule" id="MF_00071"/>
    </source>
</evidence>
<dbReference type="EC" id="3.6.5.n1" evidence="1"/>
<dbReference type="EMBL" id="CP000853">
    <property type="protein sequence ID" value="ABW18775.1"/>
    <property type="molecule type" value="Genomic_DNA"/>
</dbReference>
<dbReference type="RefSeq" id="WP_012159087.1">
    <property type="nucleotide sequence ID" value="NC_009922.1"/>
</dbReference>
<dbReference type="SMR" id="A8MFA6"/>
<dbReference type="STRING" id="350688.Clos_1229"/>
<dbReference type="KEGG" id="aoe:Clos_1229"/>
<dbReference type="eggNOG" id="COG0481">
    <property type="taxonomic scope" value="Bacteria"/>
</dbReference>
<dbReference type="HOGENOM" id="CLU_009995_3_3_9"/>
<dbReference type="OrthoDB" id="9804431at2"/>
<dbReference type="Proteomes" id="UP000000269">
    <property type="component" value="Chromosome"/>
</dbReference>
<dbReference type="GO" id="GO:0005886">
    <property type="term" value="C:plasma membrane"/>
    <property type="evidence" value="ECO:0007669"/>
    <property type="project" value="UniProtKB-SubCell"/>
</dbReference>
<dbReference type="GO" id="GO:0005525">
    <property type="term" value="F:GTP binding"/>
    <property type="evidence" value="ECO:0007669"/>
    <property type="project" value="UniProtKB-UniRule"/>
</dbReference>
<dbReference type="GO" id="GO:0003924">
    <property type="term" value="F:GTPase activity"/>
    <property type="evidence" value="ECO:0007669"/>
    <property type="project" value="UniProtKB-UniRule"/>
</dbReference>
<dbReference type="GO" id="GO:0043022">
    <property type="term" value="F:ribosome binding"/>
    <property type="evidence" value="ECO:0007669"/>
    <property type="project" value="UniProtKB-UniRule"/>
</dbReference>
<dbReference type="GO" id="GO:0003746">
    <property type="term" value="F:translation elongation factor activity"/>
    <property type="evidence" value="ECO:0007669"/>
    <property type="project" value="UniProtKB-UniRule"/>
</dbReference>
<dbReference type="GO" id="GO:0045727">
    <property type="term" value="P:positive regulation of translation"/>
    <property type="evidence" value="ECO:0007669"/>
    <property type="project" value="UniProtKB-UniRule"/>
</dbReference>
<dbReference type="CDD" id="cd03699">
    <property type="entry name" value="EF4_II"/>
    <property type="match status" value="1"/>
</dbReference>
<dbReference type="CDD" id="cd16260">
    <property type="entry name" value="EF4_III"/>
    <property type="match status" value="1"/>
</dbReference>
<dbReference type="CDD" id="cd01890">
    <property type="entry name" value="LepA"/>
    <property type="match status" value="1"/>
</dbReference>
<dbReference type="CDD" id="cd03709">
    <property type="entry name" value="lepA_C"/>
    <property type="match status" value="1"/>
</dbReference>
<dbReference type="FunFam" id="3.40.50.300:FF:000078">
    <property type="entry name" value="Elongation factor 4"/>
    <property type="match status" value="1"/>
</dbReference>
<dbReference type="FunFam" id="2.40.30.10:FF:000015">
    <property type="entry name" value="Translation factor GUF1, mitochondrial"/>
    <property type="match status" value="1"/>
</dbReference>
<dbReference type="FunFam" id="3.30.70.240:FF:000007">
    <property type="entry name" value="Translation factor GUF1, mitochondrial"/>
    <property type="match status" value="1"/>
</dbReference>
<dbReference type="FunFam" id="3.30.70.2570:FF:000001">
    <property type="entry name" value="Translation factor GUF1, mitochondrial"/>
    <property type="match status" value="1"/>
</dbReference>
<dbReference type="FunFam" id="3.30.70.870:FF:000004">
    <property type="entry name" value="Translation factor GUF1, mitochondrial"/>
    <property type="match status" value="1"/>
</dbReference>
<dbReference type="Gene3D" id="3.30.70.240">
    <property type="match status" value="1"/>
</dbReference>
<dbReference type="Gene3D" id="3.30.70.2570">
    <property type="entry name" value="Elongation factor 4, C-terminal domain"/>
    <property type="match status" value="1"/>
</dbReference>
<dbReference type="Gene3D" id="3.30.70.870">
    <property type="entry name" value="Elongation Factor G (Translational Gtpase), domain 3"/>
    <property type="match status" value="1"/>
</dbReference>
<dbReference type="Gene3D" id="3.40.50.300">
    <property type="entry name" value="P-loop containing nucleotide triphosphate hydrolases"/>
    <property type="match status" value="1"/>
</dbReference>
<dbReference type="Gene3D" id="2.40.30.10">
    <property type="entry name" value="Translation factors"/>
    <property type="match status" value="1"/>
</dbReference>
<dbReference type="HAMAP" id="MF_00071">
    <property type="entry name" value="LepA"/>
    <property type="match status" value="1"/>
</dbReference>
<dbReference type="InterPro" id="IPR006297">
    <property type="entry name" value="EF-4"/>
</dbReference>
<dbReference type="InterPro" id="IPR035647">
    <property type="entry name" value="EFG_III/V"/>
</dbReference>
<dbReference type="InterPro" id="IPR000640">
    <property type="entry name" value="EFG_V-like"/>
</dbReference>
<dbReference type="InterPro" id="IPR004161">
    <property type="entry name" value="EFTu-like_2"/>
</dbReference>
<dbReference type="InterPro" id="IPR031157">
    <property type="entry name" value="G_TR_CS"/>
</dbReference>
<dbReference type="InterPro" id="IPR038363">
    <property type="entry name" value="LepA_C_sf"/>
</dbReference>
<dbReference type="InterPro" id="IPR013842">
    <property type="entry name" value="LepA_CTD"/>
</dbReference>
<dbReference type="InterPro" id="IPR035654">
    <property type="entry name" value="LepA_IV"/>
</dbReference>
<dbReference type="InterPro" id="IPR027417">
    <property type="entry name" value="P-loop_NTPase"/>
</dbReference>
<dbReference type="InterPro" id="IPR005225">
    <property type="entry name" value="Small_GTP-bd"/>
</dbReference>
<dbReference type="InterPro" id="IPR000795">
    <property type="entry name" value="T_Tr_GTP-bd_dom"/>
</dbReference>
<dbReference type="InterPro" id="IPR009000">
    <property type="entry name" value="Transl_B-barrel_sf"/>
</dbReference>
<dbReference type="NCBIfam" id="TIGR01393">
    <property type="entry name" value="lepA"/>
    <property type="match status" value="1"/>
</dbReference>
<dbReference type="NCBIfam" id="TIGR00231">
    <property type="entry name" value="small_GTP"/>
    <property type="match status" value="1"/>
</dbReference>
<dbReference type="PANTHER" id="PTHR43512:SF4">
    <property type="entry name" value="TRANSLATION FACTOR GUF1 HOMOLOG, CHLOROPLASTIC"/>
    <property type="match status" value="1"/>
</dbReference>
<dbReference type="PANTHER" id="PTHR43512">
    <property type="entry name" value="TRANSLATION FACTOR GUF1-RELATED"/>
    <property type="match status" value="1"/>
</dbReference>
<dbReference type="Pfam" id="PF00679">
    <property type="entry name" value="EFG_C"/>
    <property type="match status" value="1"/>
</dbReference>
<dbReference type="Pfam" id="PF00009">
    <property type="entry name" value="GTP_EFTU"/>
    <property type="match status" value="1"/>
</dbReference>
<dbReference type="Pfam" id="PF03144">
    <property type="entry name" value="GTP_EFTU_D2"/>
    <property type="match status" value="1"/>
</dbReference>
<dbReference type="Pfam" id="PF06421">
    <property type="entry name" value="LepA_C"/>
    <property type="match status" value="1"/>
</dbReference>
<dbReference type="PRINTS" id="PR00315">
    <property type="entry name" value="ELONGATNFCT"/>
</dbReference>
<dbReference type="SMART" id="SM00838">
    <property type="entry name" value="EFG_C"/>
    <property type="match status" value="1"/>
</dbReference>
<dbReference type="SUPFAM" id="SSF54980">
    <property type="entry name" value="EF-G C-terminal domain-like"/>
    <property type="match status" value="2"/>
</dbReference>
<dbReference type="SUPFAM" id="SSF52540">
    <property type="entry name" value="P-loop containing nucleoside triphosphate hydrolases"/>
    <property type="match status" value="1"/>
</dbReference>
<dbReference type="SUPFAM" id="SSF50447">
    <property type="entry name" value="Translation proteins"/>
    <property type="match status" value="1"/>
</dbReference>
<dbReference type="PROSITE" id="PS00301">
    <property type="entry name" value="G_TR_1"/>
    <property type="match status" value="1"/>
</dbReference>
<dbReference type="PROSITE" id="PS51722">
    <property type="entry name" value="G_TR_2"/>
    <property type="match status" value="1"/>
</dbReference>
<comment type="function">
    <text evidence="1">Required for accurate and efficient protein synthesis under certain stress conditions. May act as a fidelity factor of the translation reaction, by catalyzing a one-codon backward translocation of tRNAs on improperly translocated ribosomes. Back-translocation proceeds from a post-translocation (POST) complex to a pre-translocation (PRE) complex, thus giving elongation factor G a second chance to translocate the tRNAs correctly. Binds to ribosomes in a GTP-dependent manner.</text>
</comment>
<comment type="catalytic activity">
    <reaction evidence="1">
        <text>GTP + H2O = GDP + phosphate + H(+)</text>
        <dbReference type="Rhea" id="RHEA:19669"/>
        <dbReference type="ChEBI" id="CHEBI:15377"/>
        <dbReference type="ChEBI" id="CHEBI:15378"/>
        <dbReference type="ChEBI" id="CHEBI:37565"/>
        <dbReference type="ChEBI" id="CHEBI:43474"/>
        <dbReference type="ChEBI" id="CHEBI:58189"/>
        <dbReference type="EC" id="3.6.5.n1"/>
    </reaction>
</comment>
<comment type="subcellular location">
    <subcellularLocation>
        <location evidence="1">Cell membrane</location>
        <topology evidence="1">Peripheral membrane protein</topology>
        <orientation evidence="1">Cytoplasmic side</orientation>
    </subcellularLocation>
</comment>
<comment type="similarity">
    <text evidence="1">Belongs to the TRAFAC class translation factor GTPase superfamily. Classic translation factor GTPase family. LepA subfamily.</text>
</comment>
<gene>
    <name evidence="1" type="primary">lepA</name>
    <name type="ordered locus">Clos_1229</name>
</gene>
<name>LEPA_ALKOO</name>
<sequence>MPSDRQKKIRNFSIIAHIDHGKSTLADRLIEYTGLISQREMQSQMLDNMDLERERGITIKLQTIRLVYKAKDGEEYYLNLIDTPGHVDFTYEVSRSLAACEGAVLIVDAAQGIEAQTLANVYLALEQDLEIIPVINKIDLPSARPDEIKTEIEDIIGLDASEAPLISAKEGLNIEDVLESIVKNVPSPKGDINAPLKALIFDSYYDSYKGVIAYMRVMEGQVKKGMKVKMMATNKEFEVVEVGAFSPGAIPLDSLSAGDVGYLAASIKDVRHCRVGDTITDALNPTESPLPGYRKVNPMVYCGIYPAEGEKYEDIRDALEKLQVNDAALVFEPESSAALGFGFRCGFLGLLHMEIIQERLEREFDLDLITTAPSVIYKITKTNGEELMIQNPANMPTPQEIRIMEEPIVKTTIMVPNTYVGAVMELCQDRRGEMKDMQYIDDTRVNLYYEMPLNEVIYDFFDALKSKTKGYGSLDYELLGYRASDLVKLDILINGEQIDALSFIVHESKAYSRGKGMCEKLKDEIPRHQFPIPLQAAVGNKVISRETIKALRKDVLAKCYGGDISRKKKLLEKQKEGKKRMRQVGNVEVPQKAFMSVLKLDN</sequence>